<feature type="chain" id="PRO_0000340430" description="Urease accessory protein UreD">
    <location>
        <begin position="1"/>
        <end position="291"/>
    </location>
</feature>
<keyword id="KW-0143">Chaperone</keyword>
<keyword id="KW-0963">Cytoplasm</keyword>
<keyword id="KW-0996">Nickel insertion</keyword>
<dbReference type="EMBL" id="CP000440">
    <property type="protein sequence ID" value="ABI86341.1"/>
    <property type="molecule type" value="Genomic_DNA"/>
</dbReference>
<dbReference type="RefSeq" id="WP_011656158.1">
    <property type="nucleotide sequence ID" value="NC_008390.1"/>
</dbReference>
<dbReference type="SMR" id="Q0BHN2"/>
<dbReference type="GeneID" id="93083810"/>
<dbReference type="KEGG" id="bam:Bamb_0782"/>
<dbReference type="PATRIC" id="fig|339670.21.peg.810"/>
<dbReference type="eggNOG" id="COG0829">
    <property type="taxonomic scope" value="Bacteria"/>
</dbReference>
<dbReference type="Proteomes" id="UP000000662">
    <property type="component" value="Chromosome 1"/>
</dbReference>
<dbReference type="GO" id="GO:0005737">
    <property type="term" value="C:cytoplasm"/>
    <property type="evidence" value="ECO:0007669"/>
    <property type="project" value="UniProtKB-SubCell"/>
</dbReference>
<dbReference type="GO" id="GO:0016151">
    <property type="term" value="F:nickel cation binding"/>
    <property type="evidence" value="ECO:0007669"/>
    <property type="project" value="UniProtKB-UniRule"/>
</dbReference>
<dbReference type="HAMAP" id="MF_01384">
    <property type="entry name" value="UreD"/>
    <property type="match status" value="1"/>
</dbReference>
<dbReference type="InterPro" id="IPR002669">
    <property type="entry name" value="UreD"/>
</dbReference>
<dbReference type="PANTHER" id="PTHR33643">
    <property type="entry name" value="UREASE ACCESSORY PROTEIN D"/>
    <property type="match status" value="1"/>
</dbReference>
<dbReference type="PANTHER" id="PTHR33643:SF1">
    <property type="entry name" value="UREASE ACCESSORY PROTEIN D"/>
    <property type="match status" value="1"/>
</dbReference>
<dbReference type="Pfam" id="PF01774">
    <property type="entry name" value="UreD"/>
    <property type="match status" value="1"/>
</dbReference>
<reference key="1">
    <citation type="submission" date="2006-08" db="EMBL/GenBank/DDBJ databases">
        <title>Complete sequence of chromosome 1 of Burkholderia cepacia AMMD.</title>
        <authorList>
            <person name="Copeland A."/>
            <person name="Lucas S."/>
            <person name="Lapidus A."/>
            <person name="Barry K."/>
            <person name="Detter J.C."/>
            <person name="Glavina del Rio T."/>
            <person name="Hammon N."/>
            <person name="Israni S."/>
            <person name="Pitluck S."/>
            <person name="Bruce D."/>
            <person name="Chain P."/>
            <person name="Malfatti S."/>
            <person name="Shin M."/>
            <person name="Vergez L."/>
            <person name="Schmutz J."/>
            <person name="Larimer F."/>
            <person name="Land M."/>
            <person name="Hauser L."/>
            <person name="Kyrpides N."/>
            <person name="Kim E."/>
            <person name="Parke J."/>
            <person name="Coenye T."/>
            <person name="Konstantinidis K."/>
            <person name="Ramette A."/>
            <person name="Tiedje J."/>
            <person name="Richardson P."/>
        </authorList>
    </citation>
    <scope>NUCLEOTIDE SEQUENCE [LARGE SCALE GENOMIC DNA]</scope>
    <source>
        <strain>ATCC BAA-244 / DSM 16087 / CCUG 44356 / LMG 19182 / AMMD</strain>
    </source>
</reference>
<proteinExistence type="inferred from homology"/>
<evidence type="ECO:0000255" key="1">
    <source>
        <dbReference type="HAMAP-Rule" id="MF_01384"/>
    </source>
</evidence>
<gene>
    <name evidence="1" type="primary">ureD</name>
    <name type="ordered locus">Bamb_0782</name>
</gene>
<protein>
    <recommendedName>
        <fullName evidence="1">Urease accessory protein UreD</fullName>
    </recommendedName>
</protein>
<accession>Q0BHN2</accession>
<sequence length="291" mass="30859">MSAPDSHASLSRPSVAKSWRGRLELGFERHGARTTLVHRLHDGPLRVQRPLYPEGDAICHAVIVHPPGGVAGGDQLDIGIALGDGTHAVLTTPGATKWYKSNGLDATQRIGITVGAHAKLDWLPQNNLFFDAAHAALDFTVTLGAGASAIGWDATQLGRQAAGETWSAGRIASRSALVDADGRPLWTERALLDAHDPLRGALQGLAGFPVYGTLWAAGAACDAALAEALAARMPFDDTLRAGATCVTPGVVLVRALSTSMEALQRHFADCWLYLRPIVHGVDARPLRLWQT</sequence>
<organism>
    <name type="scientific">Burkholderia ambifaria (strain ATCC BAA-244 / DSM 16087 / CCUG 44356 / LMG 19182 / AMMD)</name>
    <name type="common">Burkholderia cepacia (strain AMMD)</name>
    <dbReference type="NCBI Taxonomy" id="339670"/>
    <lineage>
        <taxon>Bacteria</taxon>
        <taxon>Pseudomonadati</taxon>
        <taxon>Pseudomonadota</taxon>
        <taxon>Betaproteobacteria</taxon>
        <taxon>Burkholderiales</taxon>
        <taxon>Burkholderiaceae</taxon>
        <taxon>Burkholderia</taxon>
        <taxon>Burkholderia cepacia complex</taxon>
    </lineage>
</organism>
<comment type="function">
    <text evidence="1">Required for maturation of urease via the functional incorporation of the urease nickel metallocenter.</text>
</comment>
<comment type="subunit">
    <text evidence="1">UreD, UreF and UreG form a complex that acts as a GTP-hydrolysis-dependent molecular chaperone, activating the urease apoprotein by helping to assemble the nickel containing metallocenter of UreC. The UreE protein probably delivers the nickel.</text>
</comment>
<comment type="subcellular location">
    <subcellularLocation>
        <location evidence="1">Cytoplasm</location>
    </subcellularLocation>
</comment>
<comment type="similarity">
    <text evidence="1">Belongs to the UreD family.</text>
</comment>
<name>URED_BURCM</name>